<protein>
    <recommendedName>
        <fullName evidence="4">Esterase Rv3036c</fullName>
        <ecNumber evidence="2">3.1.1.-</ecNumber>
    </recommendedName>
</protein>
<proteinExistence type="evidence at protein level"/>
<evidence type="ECO:0000255" key="1"/>
<evidence type="ECO:0000269" key="2">
    <source>
    </source>
</evidence>
<evidence type="ECO:0000269" key="3">
    <source>
    </source>
</evidence>
<evidence type="ECO:0000305" key="4"/>
<evidence type="ECO:0000305" key="5">
    <source>
    </source>
</evidence>
<evidence type="ECO:0000312" key="6">
    <source>
        <dbReference type="EMBL" id="CCP45845.1"/>
    </source>
</evidence>
<evidence type="ECO:0007744" key="7">
    <source>
    </source>
</evidence>
<organism>
    <name type="scientific">Mycobacterium tuberculosis (strain ATCC 25618 / H37Rv)</name>
    <dbReference type="NCBI Taxonomy" id="83332"/>
    <lineage>
        <taxon>Bacteria</taxon>
        <taxon>Bacillati</taxon>
        <taxon>Actinomycetota</taxon>
        <taxon>Actinomycetes</taxon>
        <taxon>Mycobacteriales</taxon>
        <taxon>Mycobacteriaceae</taxon>
        <taxon>Mycobacterium</taxon>
        <taxon>Mycobacterium tuberculosis complex</taxon>
    </lineage>
</organism>
<comment type="function">
    <text evidence="2">Hydrolyzes ester substrates carbon chain lengths ranging from C2 to C14 (PubMed:25224799). In vitro, acetate (C2), butyrate (C4) and caprylate (C6) are hydrolyzed with high efficiency. Has lower activity against laurate (C12), myristate (C14) and caproate (C8), and weak activity against palmitate (C16) (PubMed:25224799).</text>
</comment>
<comment type="catalytic activity">
    <reaction evidence="2">
        <text>a fatty acid ester + H2O = an aliphatic alcohol + a fatty acid + H(+)</text>
        <dbReference type="Rhea" id="RHEA:59388"/>
        <dbReference type="ChEBI" id="CHEBI:2571"/>
        <dbReference type="ChEBI" id="CHEBI:15377"/>
        <dbReference type="ChEBI" id="CHEBI:15378"/>
        <dbReference type="ChEBI" id="CHEBI:28868"/>
        <dbReference type="ChEBI" id="CHEBI:35748"/>
    </reaction>
</comment>
<comment type="catalytic activity">
    <reaction evidence="2">
        <text>an acetyl ester + H2O = an aliphatic alcohol + acetate + H(+)</text>
        <dbReference type="Rhea" id="RHEA:12957"/>
        <dbReference type="ChEBI" id="CHEBI:2571"/>
        <dbReference type="ChEBI" id="CHEBI:15377"/>
        <dbReference type="ChEBI" id="CHEBI:15378"/>
        <dbReference type="ChEBI" id="CHEBI:30089"/>
        <dbReference type="ChEBI" id="CHEBI:47622"/>
    </reaction>
</comment>
<comment type="catalytic activity">
    <reaction evidence="2">
        <text>a butanoate ester + H2O = an aliphatic alcohol + butanoate + H(+)</text>
        <dbReference type="Rhea" id="RHEA:47348"/>
        <dbReference type="ChEBI" id="CHEBI:2571"/>
        <dbReference type="ChEBI" id="CHEBI:15377"/>
        <dbReference type="ChEBI" id="CHEBI:15378"/>
        <dbReference type="ChEBI" id="CHEBI:17968"/>
        <dbReference type="ChEBI" id="CHEBI:50477"/>
    </reaction>
</comment>
<comment type="catalytic activity">
    <reaction evidence="2">
        <text>a hexanoate ester + H2O = an aliphatic alcohol + hexanoate + H(+)</text>
        <dbReference type="Rhea" id="RHEA:47352"/>
        <dbReference type="ChEBI" id="CHEBI:2571"/>
        <dbReference type="ChEBI" id="CHEBI:15377"/>
        <dbReference type="ChEBI" id="CHEBI:15378"/>
        <dbReference type="ChEBI" id="CHEBI:17120"/>
        <dbReference type="ChEBI" id="CHEBI:87656"/>
    </reaction>
</comment>
<comment type="catalytic activity">
    <reaction evidence="2">
        <text>a dodecanoate ester + H2O = an aliphatic alcohol + dodecanoate + H(+)</text>
        <dbReference type="Rhea" id="RHEA:47364"/>
        <dbReference type="ChEBI" id="CHEBI:2571"/>
        <dbReference type="ChEBI" id="CHEBI:15377"/>
        <dbReference type="ChEBI" id="CHEBI:15378"/>
        <dbReference type="ChEBI" id="CHEBI:18262"/>
        <dbReference type="ChEBI" id="CHEBI:87659"/>
    </reaction>
</comment>
<comment type="catalytic activity">
    <reaction evidence="2">
        <text>a tetradecanoate ester + H2O = an aliphatic alcohol + tetradecanoate + H(+)</text>
        <dbReference type="Rhea" id="RHEA:47388"/>
        <dbReference type="ChEBI" id="CHEBI:2571"/>
        <dbReference type="ChEBI" id="CHEBI:15377"/>
        <dbReference type="ChEBI" id="CHEBI:15378"/>
        <dbReference type="ChEBI" id="CHEBI:30807"/>
        <dbReference type="ChEBI" id="CHEBI:87691"/>
    </reaction>
</comment>
<comment type="catalytic activity">
    <reaction evidence="2">
        <text>an octanoate ester + H2O = an aliphatic alcohol + octanoate + H(+)</text>
        <dbReference type="Rhea" id="RHEA:47356"/>
        <dbReference type="ChEBI" id="CHEBI:2571"/>
        <dbReference type="ChEBI" id="CHEBI:15377"/>
        <dbReference type="ChEBI" id="CHEBI:15378"/>
        <dbReference type="ChEBI" id="CHEBI:25646"/>
        <dbReference type="ChEBI" id="CHEBI:87657"/>
    </reaction>
</comment>
<comment type="biophysicochemical properties">
    <phDependence>
        <text evidence="2">Optimum pH is 8.0.</text>
    </phDependence>
    <temperatureDependence>
        <text evidence="2">Optimum temperature is 38 degrees Celsius.</text>
    </temperatureDependence>
</comment>
<comment type="subcellular location">
    <subcellularLocation>
        <location evidence="5">Cell membrane</location>
        <topology evidence="1">Single-pass membrane protein</topology>
    </subcellularLocation>
    <subcellularLocation>
        <location evidence="2">Secreted</location>
        <location evidence="2">Cell wall</location>
    </subcellularLocation>
    <text evidence="2">Probably anchored in the cell wall and cell membrane via an N-terminal transmembrane helix.</text>
</comment>
<comment type="developmental stage">
    <text evidence="3">Remains active in dormant M.tuberculosis.</text>
</comment>
<comment type="similarity">
    <text evidence="4">Belongs to the RsiV family.</text>
</comment>
<accession>I6YF08</accession>
<sequence length="227" mass="24407">MRYLIATAVLVAVVLVGWPAAGAPPSCAGLGGTVQAGQICHVHASGPKYMLDMTFPVDYPDQQALTDYITQNRDGFVNVAQGSPLRDQPYQMDATSEQHSSGQPPQATRSVVLKFFQDLGGAHPSTWYKAFNYNLATSQPITFDTLFVPGTTPLDSIYPIVQRELARQTGFGAAILPSTGLDPAHYQNFAITDDSLIFYFAQGELLPSFVGACQAQVPRSAIPPLAI</sequence>
<feature type="chain" id="PRO_5010212191" description="Esterase Rv3036c" evidence="1">
    <location>
        <begin position="1"/>
        <end position="227"/>
    </location>
</feature>
<feature type="transmembrane region" description="Helical" evidence="1">
    <location>
        <begin position="3"/>
        <end position="23"/>
    </location>
</feature>
<gene>
    <name evidence="6" type="primary">TB22.2</name>
    <name evidence="6" type="ordered locus">Rv3036c</name>
</gene>
<dbReference type="EC" id="3.1.1.-" evidence="2"/>
<dbReference type="EMBL" id="AL123456">
    <property type="protein sequence ID" value="CCP45845.1"/>
    <property type="molecule type" value="Genomic_DNA"/>
</dbReference>
<dbReference type="RefSeq" id="NP_217552.1">
    <property type="nucleotide sequence ID" value="NC_000962.3"/>
</dbReference>
<dbReference type="RefSeq" id="WP_003415939.1">
    <property type="nucleotide sequence ID" value="NZ_NVQJ01000011.1"/>
</dbReference>
<dbReference type="SMR" id="I6YF08"/>
<dbReference type="STRING" id="83332.Rv3036c"/>
<dbReference type="SwissLipids" id="SLP:000001444"/>
<dbReference type="PaxDb" id="83332-Rv3036c"/>
<dbReference type="DNASU" id="887320"/>
<dbReference type="GeneID" id="887320"/>
<dbReference type="KEGG" id="mtu:Rv3036c"/>
<dbReference type="KEGG" id="mtv:RVBD_3036c"/>
<dbReference type="PATRIC" id="fig|83332.111.peg.3383"/>
<dbReference type="TubercuList" id="Rv3036c"/>
<dbReference type="eggNOG" id="ENOG502ZA8P">
    <property type="taxonomic scope" value="Bacteria"/>
</dbReference>
<dbReference type="InParanoid" id="I6YF08"/>
<dbReference type="OrthoDB" id="4696640at2"/>
<dbReference type="Proteomes" id="UP000001584">
    <property type="component" value="Chromosome"/>
</dbReference>
<dbReference type="GO" id="GO:0005576">
    <property type="term" value="C:extracellular region"/>
    <property type="evidence" value="ECO:0007669"/>
    <property type="project" value="UniProtKB-KW"/>
</dbReference>
<dbReference type="GO" id="GO:0005886">
    <property type="term" value="C:plasma membrane"/>
    <property type="evidence" value="ECO:0007669"/>
    <property type="project" value="UniProtKB-SubCell"/>
</dbReference>
<dbReference type="GO" id="GO:0008126">
    <property type="term" value="F:acetylesterase activity"/>
    <property type="evidence" value="ECO:0007669"/>
    <property type="project" value="RHEA"/>
</dbReference>
<dbReference type="GO" id="GO:0006629">
    <property type="term" value="P:lipid metabolic process"/>
    <property type="evidence" value="ECO:0007669"/>
    <property type="project" value="UniProtKB-KW"/>
</dbReference>
<dbReference type="Gene3D" id="3.30.565.40">
    <property type="entry name" value="Fervidobacterium nodosum Rt17-B1 like"/>
    <property type="match status" value="1"/>
</dbReference>
<dbReference type="Gene3D" id="3.90.640.20">
    <property type="entry name" value="Heat-shock cognate protein, ATPase"/>
    <property type="match status" value="1"/>
</dbReference>
<dbReference type="InterPro" id="IPR021729">
    <property type="entry name" value="DUF3298"/>
</dbReference>
<dbReference type="InterPro" id="IPR053421">
    <property type="entry name" value="Esterase_Immunogenic_RsiV"/>
</dbReference>
<dbReference type="InterPro" id="IPR037126">
    <property type="entry name" value="PdaC/RsiV-like_sf"/>
</dbReference>
<dbReference type="NCBIfam" id="NF043047">
    <property type="entry name" value="EstaseRv3036c"/>
    <property type="match status" value="1"/>
</dbReference>
<dbReference type="Pfam" id="PF11738">
    <property type="entry name" value="DUF3298"/>
    <property type="match status" value="1"/>
</dbReference>
<keyword id="KW-1003">Cell membrane</keyword>
<keyword id="KW-0134">Cell wall</keyword>
<keyword id="KW-0378">Hydrolase</keyword>
<keyword id="KW-0443">Lipid metabolism</keyword>
<keyword id="KW-0472">Membrane</keyword>
<keyword id="KW-1185">Reference proteome</keyword>
<keyword id="KW-0964">Secreted</keyword>
<keyword id="KW-0812">Transmembrane</keyword>
<keyword id="KW-1133">Transmembrane helix</keyword>
<name>ESTR2_MYCTU</name>
<reference key="1">
    <citation type="journal article" date="1998" name="Nature">
        <title>Deciphering the biology of Mycobacterium tuberculosis from the complete genome sequence.</title>
        <authorList>
            <person name="Cole S.T."/>
            <person name="Brosch R."/>
            <person name="Parkhill J."/>
            <person name="Garnier T."/>
            <person name="Churcher C.M."/>
            <person name="Harris D.E."/>
            <person name="Gordon S.V."/>
            <person name="Eiglmeier K."/>
            <person name="Gas S."/>
            <person name="Barry C.E. III"/>
            <person name="Tekaia F."/>
            <person name="Badcock K."/>
            <person name="Basham D."/>
            <person name="Brown D."/>
            <person name="Chillingworth T."/>
            <person name="Connor R."/>
            <person name="Davies R.M."/>
            <person name="Devlin K."/>
            <person name="Feltwell T."/>
            <person name="Gentles S."/>
            <person name="Hamlin N."/>
            <person name="Holroyd S."/>
            <person name="Hornsby T."/>
            <person name="Jagels K."/>
            <person name="Krogh A."/>
            <person name="McLean J."/>
            <person name="Moule S."/>
            <person name="Murphy L.D."/>
            <person name="Oliver S."/>
            <person name="Osborne J."/>
            <person name="Quail M.A."/>
            <person name="Rajandream M.A."/>
            <person name="Rogers J."/>
            <person name="Rutter S."/>
            <person name="Seeger K."/>
            <person name="Skelton S."/>
            <person name="Squares S."/>
            <person name="Squares R."/>
            <person name="Sulston J.E."/>
            <person name="Taylor K."/>
            <person name="Whitehead S."/>
            <person name="Barrell B.G."/>
        </authorList>
    </citation>
    <scope>NUCLEOTIDE SEQUENCE [LARGE SCALE GENOMIC DNA]</scope>
    <source>
        <strain>ATCC 25618 / H37Rv</strain>
    </source>
</reference>
<reference evidence="7" key="2">
    <citation type="journal article" date="2011" name="Mol. Cell. Proteomics">
        <title>Proteogenomic analysis of Mycobacterium tuberculosis by high resolution mass spectrometry.</title>
        <authorList>
            <person name="Kelkar D.S."/>
            <person name="Kumar D."/>
            <person name="Kumar P."/>
            <person name="Balakrishnan L."/>
            <person name="Muthusamy B."/>
            <person name="Yadav A.K."/>
            <person name="Shrivastava P."/>
            <person name="Marimuthu A."/>
            <person name="Anand S."/>
            <person name="Sundaram H."/>
            <person name="Kingsbury R."/>
            <person name="Harsha H.C."/>
            <person name="Nair B."/>
            <person name="Prasad T.S."/>
            <person name="Chauhan D.S."/>
            <person name="Katoch K."/>
            <person name="Katoch V.M."/>
            <person name="Kumar P."/>
            <person name="Chaerkady R."/>
            <person name="Ramachandran S."/>
            <person name="Dash D."/>
            <person name="Pandey A."/>
        </authorList>
    </citation>
    <scope>IDENTIFICATION BY MASS SPECTROMETRY [LARGE SCALE ANALYSIS]</scope>
</reference>
<reference key="3">
    <citation type="journal article" date="2014" name="Protein Expr. Purif.">
        <title>Characterization of a novel exported esterase Rv3036c from Mycobacterium tuberculosis.</title>
        <authorList>
            <person name="Chen L."/>
            <person name="Dang G."/>
            <person name="Deng X."/>
            <person name="Cao J."/>
            <person name="Yu S."/>
            <person name="Wu D."/>
            <person name="Pang H."/>
            <person name="Liu S."/>
        </authorList>
    </citation>
    <scope>FUNCTION</scope>
    <scope>CATALYTIC ACTIVITY</scope>
    <scope>BIOPHYSICOCHEMICAL PROPERTIES</scope>
    <scope>SUBCELLULAR LOCATION</scope>
</reference>
<reference key="4">
    <citation type="journal article" date="2016" name="ACS Infect. Dis.">
        <title>Small-molecule probes reveal esterases with persistent activity in dormant and reactivating Mycobacterium tuberculosis.</title>
        <authorList>
            <person name="Tallman K.R."/>
            <person name="Levine S.R."/>
            <person name="Beatty K.E."/>
        </authorList>
    </citation>
    <scope>DEVELOPMENTAL STAGE</scope>
</reference>